<sequence length="123" mass="14223">KQFTKCELSQVLKSMDGYKGVTLPEWICTIFHSSGYDTQTIVKNNGKTEYGLFQINNKMWCRDNQILPSRNICGISCDKFLDDDLTDDVMCAKKILDSEGIDYWLAHKPLCSEKLEQWLCEEL</sequence>
<keyword id="KW-0106">Calcium</keyword>
<keyword id="KW-0903">Direct protein sequencing</keyword>
<keyword id="KW-1015">Disulfide bond</keyword>
<keyword id="KW-0422">Lactose biosynthesis</keyword>
<keyword id="KW-0479">Metal-binding</keyword>
<keyword id="KW-0494">Milk protein</keyword>
<keyword id="KW-1185">Reference proteome</keyword>
<keyword id="KW-0964">Secreted</keyword>
<accession>P08334</accession>
<protein>
    <recommendedName>
        <fullName>Alpha-lactalbumin A</fullName>
    </recommendedName>
    <alternativeName>
        <fullName>Lactose synthase B protein</fullName>
    </alternativeName>
</protein>
<comment type="function">
    <text>Regulatory subunit of lactose synthase, changes the substrate specificity of galactosyltransferase in the mammary gland making glucose a good acceptor substrate for this enzyme. This enables LS to synthesize lactose, the major carbohydrate component of milk. In other tissues, galactosyltransferase transfers galactose onto the N-acetylglucosamine of the oligosaccharide chains in glycoproteins.</text>
</comment>
<comment type="subunit">
    <text>Lactose synthase (LS) is a heterodimer of a catalytic component, beta1,4-galactosyltransferase (beta4Gal-T1) and a regulatory component, alpha-lactalbumin (LA).</text>
</comment>
<comment type="subcellular location">
    <subcellularLocation>
        <location>Secreted</location>
    </subcellularLocation>
</comment>
<comment type="tissue specificity">
    <text>Mammary gland specific. Secreted in milk.</text>
</comment>
<comment type="similarity">
    <text evidence="2">Belongs to the glycosyl hydrolase 22 family.</text>
</comment>
<organism>
    <name type="scientific">Equus caballus</name>
    <name type="common">Horse</name>
    <dbReference type="NCBI Taxonomy" id="9796"/>
    <lineage>
        <taxon>Eukaryota</taxon>
        <taxon>Metazoa</taxon>
        <taxon>Chordata</taxon>
        <taxon>Craniata</taxon>
        <taxon>Vertebrata</taxon>
        <taxon>Euteleostomi</taxon>
        <taxon>Mammalia</taxon>
        <taxon>Eutheria</taxon>
        <taxon>Laurasiatheria</taxon>
        <taxon>Perissodactyla</taxon>
        <taxon>Equidae</taxon>
        <taxon>Equus</taxon>
    </lineage>
</organism>
<reference key="1">
    <citation type="journal article" date="1984" name="Biochem. Int.">
        <title>The amino acid sequence of equine alpha-lactalbumin.</title>
        <authorList>
            <person name="Kaminogawa S."/>
            <person name="McKenzie H.A."/>
            <person name="Shaw D.C."/>
        </authorList>
    </citation>
    <scope>PROTEIN SEQUENCE</scope>
</reference>
<reference key="2">
    <citation type="journal article" date="1987" name="Biol. Chem. Hoppe-Seyler">
        <title>Identification and the primary structure of equine alpha-lactalbumin B and C (Equus caballus, Perissodactyla).</title>
        <authorList>
            <person name="Godovac-Zimmermann J."/>
            <person name="Shaw D."/>
            <person name="Conti A."/>
            <person name="McKenzie H.A."/>
        </authorList>
    </citation>
    <scope>SEQUENCE REVISION TO 10</scope>
</reference>
<dbReference type="PIR" id="A29147">
    <property type="entry name" value="LAHO"/>
</dbReference>
<dbReference type="SMR" id="P08334"/>
<dbReference type="FunCoup" id="P08334">
    <property type="interactions" value="77"/>
</dbReference>
<dbReference type="STRING" id="9796.ENSECAP00000001776"/>
<dbReference type="Allergome" id="1498">
    <property type="allergen name" value="Equ c ALA"/>
</dbReference>
<dbReference type="PaxDb" id="9796-ENSECAP00000001776"/>
<dbReference type="PeptideAtlas" id="P08334"/>
<dbReference type="InParanoid" id="P08334"/>
<dbReference type="Proteomes" id="UP000002281">
    <property type="component" value="Unplaced"/>
</dbReference>
<dbReference type="GO" id="GO:0005576">
    <property type="term" value="C:extracellular region"/>
    <property type="evidence" value="ECO:0007669"/>
    <property type="project" value="UniProtKB-SubCell"/>
</dbReference>
<dbReference type="GO" id="GO:0005509">
    <property type="term" value="F:calcium ion binding"/>
    <property type="evidence" value="ECO:0007669"/>
    <property type="project" value="InterPro"/>
</dbReference>
<dbReference type="GO" id="GO:0004461">
    <property type="term" value="F:lactose synthase activity"/>
    <property type="evidence" value="ECO:0007669"/>
    <property type="project" value="InterPro"/>
</dbReference>
<dbReference type="GO" id="GO:0003796">
    <property type="term" value="F:lysozyme activity"/>
    <property type="evidence" value="ECO:0000318"/>
    <property type="project" value="GO_Central"/>
</dbReference>
<dbReference type="GO" id="GO:0050829">
    <property type="term" value="P:defense response to Gram-negative bacterium"/>
    <property type="evidence" value="ECO:0000318"/>
    <property type="project" value="GO_Central"/>
</dbReference>
<dbReference type="GO" id="GO:0050830">
    <property type="term" value="P:defense response to Gram-positive bacterium"/>
    <property type="evidence" value="ECO:0000318"/>
    <property type="project" value="GO_Central"/>
</dbReference>
<dbReference type="GO" id="GO:0005989">
    <property type="term" value="P:lactose biosynthetic process"/>
    <property type="evidence" value="ECO:0007669"/>
    <property type="project" value="UniProtKB-KW"/>
</dbReference>
<dbReference type="CDD" id="cd16898">
    <property type="entry name" value="LYZ_LA"/>
    <property type="match status" value="1"/>
</dbReference>
<dbReference type="FunFam" id="1.10.530.10:FF:000014">
    <property type="entry name" value="Alpha-lactalbumin"/>
    <property type="match status" value="1"/>
</dbReference>
<dbReference type="Gene3D" id="1.10.530.10">
    <property type="match status" value="1"/>
</dbReference>
<dbReference type="InterPro" id="IPR001916">
    <property type="entry name" value="Glyco_hydro_22"/>
</dbReference>
<dbReference type="InterPro" id="IPR019799">
    <property type="entry name" value="Glyco_hydro_22_CS"/>
</dbReference>
<dbReference type="InterPro" id="IPR000545">
    <property type="entry name" value="Lactalbumin"/>
</dbReference>
<dbReference type="InterPro" id="IPR023346">
    <property type="entry name" value="Lysozyme-like_dom_sf"/>
</dbReference>
<dbReference type="PANTHER" id="PTHR11407:SF32">
    <property type="entry name" value="ALPHA-LACTALBUMIN"/>
    <property type="match status" value="1"/>
</dbReference>
<dbReference type="PANTHER" id="PTHR11407">
    <property type="entry name" value="LYSOZYME C"/>
    <property type="match status" value="1"/>
</dbReference>
<dbReference type="Pfam" id="PF00062">
    <property type="entry name" value="Lys"/>
    <property type="match status" value="1"/>
</dbReference>
<dbReference type="PRINTS" id="PR00136">
    <property type="entry name" value="LACTALBUMIN"/>
</dbReference>
<dbReference type="PRINTS" id="PR00135">
    <property type="entry name" value="LYZLACT"/>
</dbReference>
<dbReference type="SMART" id="SM00263">
    <property type="entry name" value="LYZ1"/>
    <property type="match status" value="1"/>
</dbReference>
<dbReference type="SUPFAM" id="SSF53955">
    <property type="entry name" value="Lysozyme-like"/>
    <property type="match status" value="1"/>
</dbReference>
<dbReference type="PROSITE" id="PS00128">
    <property type="entry name" value="GLYCOSYL_HYDROL_F22_1"/>
    <property type="match status" value="1"/>
</dbReference>
<dbReference type="PROSITE" id="PS51348">
    <property type="entry name" value="GLYCOSYL_HYDROL_F22_2"/>
    <property type="match status" value="1"/>
</dbReference>
<name>LALB1_HORSE</name>
<evidence type="ECO:0000250" key="1">
    <source>
        <dbReference type="UniProtKB" id="P00711"/>
    </source>
</evidence>
<evidence type="ECO:0000255" key="2">
    <source>
        <dbReference type="PROSITE-ProRule" id="PRU00680"/>
    </source>
</evidence>
<feature type="chain" id="PRO_0000208836" description="Alpha-lactalbumin A">
    <location>
        <begin position="1"/>
        <end position="123"/>
    </location>
</feature>
<feature type="domain" description="C-type lysozyme" evidence="2">
    <location>
        <begin position="1"/>
        <end position="123"/>
    </location>
</feature>
<feature type="binding site" evidence="1">
    <location>
        <position position="79"/>
    </location>
    <ligand>
        <name>Ca(2+)</name>
        <dbReference type="ChEBI" id="CHEBI:29108"/>
    </ligand>
</feature>
<feature type="binding site" evidence="1">
    <location>
        <position position="82"/>
    </location>
    <ligand>
        <name>Ca(2+)</name>
        <dbReference type="ChEBI" id="CHEBI:29108"/>
    </ligand>
</feature>
<feature type="binding site" evidence="1">
    <location>
        <position position="84"/>
    </location>
    <ligand>
        <name>Ca(2+)</name>
        <dbReference type="ChEBI" id="CHEBI:29108"/>
    </ligand>
</feature>
<feature type="binding site" evidence="1">
    <location>
        <position position="87"/>
    </location>
    <ligand>
        <name>Ca(2+)</name>
        <dbReference type="ChEBI" id="CHEBI:29108"/>
    </ligand>
</feature>
<feature type="binding site" evidence="1">
    <location>
        <position position="88"/>
    </location>
    <ligand>
        <name>Ca(2+)</name>
        <dbReference type="ChEBI" id="CHEBI:29108"/>
    </ligand>
</feature>
<feature type="disulfide bond" evidence="2">
    <location>
        <begin position="6"/>
        <end position="120"/>
    </location>
</feature>
<feature type="disulfide bond" evidence="2">
    <location>
        <begin position="28"/>
        <end position="111"/>
    </location>
</feature>
<feature type="disulfide bond" evidence="2">
    <location>
        <begin position="61"/>
        <end position="77"/>
    </location>
</feature>
<feature type="disulfide bond" evidence="2">
    <location>
        <begin position="73"/>
        <end position="91"/>
    </location>
</feature>
<proteinExistence type="evidence at protein level"/>